<organism>
    <name type="scientific">Escherichia coli O17:K52:H18 (strain UMN026 / ExPEC)</name>
    <dbReference type="NCBI Taxonomy" id="585056"/>
    <lineage>
        <taxon>Bacteria</taxon>
        <taxon>Pseudomonadati</taxon>
        <taxon>Pseudomonadota</taxon>
        <taxon>Gammaproteobacteria</taxon>
        <taxon>Enterobacterales</taxon>
        <taxon>Enterobacteriaceae</taxon>
        <taxon>Escherichia</taxon>
    </lineage>
</organism>
<protein>
    <recommendedName>
        <fullName evidence="1">Glycogen debranching enzyme</fullName>
        <ecNumber evidence="1">3.2.1.196</ecNumber>
    </recommendedName>
    <alternativeName>
        <fullName evidence="1">Limit dextrin alpha-1,6-maltotetraose-hydrolase</fullName>
    </alternativeName>
</protein>
<keyword id="KW-0119">Carbohydrate metabolism</keyword>
<keyword id="KW-0321">Glycogen metabolism</keyword>
<keyword id="KW-0326">Glycosidase</keyword>
<keyword id="KW-0378">Hydrolase</keyword>
<evidence type="ECO:0000255" key="1">
    <source>
        <dbReference type="HAMAP-Rule" id="MF_01248"/>
    </source>
</evidence>
<evidence type="ECO:0000256" key="2">
    <source>
        <dbReference type="SAM" id="MobiDB-lite"/>
    </source>
</evidence>
<reference key="1">
    <citation type="journal article" date="2009" name="PLoS Genet.">
        <title>Organised genome dynamics in the Escherichia coli species results in highly diverse adaptive paths.</title>
        <authorList>
            <person name="Touchon M."/>
            <person name="Hoede C."/>
            <person name="Tenaillon O."/>
            <person name="Barbe V."/>
            <person name="Baeriswyl S."/>
            <person name="Bidet P."/>
            <person name="Bingen E."/>
            <person name="Bonacorsi S."/>
            <person name="Bouchier C."/>
            <person name="Bouvet O."/>
            <person name="Calteau A."/>
            <person name="Chiapello H."/>
            <person name="Clermont O."/>
            <person name="Cruveiller S."/>
            <person name="Danchin A."/>
            <person name="Diard M."/>
            <person name="Dossat C."/>
            <person name="Karoui M.E."/>
            <person name="Frapy E."/>
            <person name="Garry L."/>
            <person name="Ghigo J.M."/>
            <person name="Gilles A.M."/>
            <person name="Johnson J."/>
            <person name="Le Bouguenec C."/>
            <person name="Lescat M."/>
            <person name="Mangenot S."/>
            <person name="Martinez-Jehanne V."/>
            <person name="Matic I."/>
            <person name="Nassif X."/>
            <person name="Oztas S."/>
            <person name="Petit M.A."/>
            <person name="Pichon C."/>
            <person name="Rouy Z."/>
            <person name="Ruf C.S."/>
            <person name="Schneider D."/>
            <person name="Tourret J."/>
            <person name="Vacherie B."/>
            <person name="Vallenet D."/>
            <person name="Medigue C."/>
            <person name="Rocha E.P.C."/>
            <person name="Denamur E."/>
        </authorList>
    </citation>
    <scope>NUCLEOTIDE SEQUENCE [LARGE SCALE GENOMIC DNA]</scope>
    <source>
        <strain>UMN026 / ExPEC</strain>
    </source>
</reference>
<sequence>MTQLAIGKPAPLGAHYDGQGVNFTLFSAHAERVELCIFDANGQEHRYDLPGHSGDIWHGYLPDARPGLRYGYRVHGPWQPAEGHRFNPAKLLIDPCARQIDGEFKDNPLLHAGHNEPDYRDNAAIAPKCVVVVDHYDWEDDAPPRTPWGSTIIYEAHVKGLTYLHPEIPVEIRGTYKALGHPVMINYLKQLGITALELLPVAQFASEPRLQRMGLSNYWGYNPVAMFALHPAYACSPETALDEFRDAIKALHKAGIEVILDIVLNHSAELDLDGPLFSLRGIDNRSYYWIREDGDYHNWTGCGNTLNLSHPAVVDYASACLRYWVETCHVDGFRFDLAAVMGRTPEFRQDAPLFTAIQNCPVLSQVKLIAEPWDIAPGGYQVGNFPPLFAEWNDHFRDAARRFWLHYDLPLGAFAGRFAASSDVFKRNGRLPSAAINLVTAHDGFTLRDCVCFNHKHNEANGEENRDGTNNNYSNNHGKEGLGGTLDLVERRRDSIHALLTTLLLSQGTPMLLAGDEHGHSQHGNNNAYCQDNQLTWLDWSQASSGLTAFTAALIHLRKRIPALVENRWWEEGDGNVRWLNRYAQPLSTDEWQNGPKQLQILLSDRFLIAINATLEVTEIVLPAGEWHAIPPFAGEDNPVITAVWQGPAHGLCVFQR</sequence>
<comment type="function">
    <text evidence="1">Removes maltotriose and maltotetraose chains that are attached by 1,6-alpha-linkage to the limit dextrin main chain, generating a debranched limit dextrin.</text>
</comment>
<comment type="catalytic activity">
    <reaction evidence="1">
        <text>Hydrolysis of (1-&gt;6)-alpha-D-glucosidic linkages to branches with degrees of polymerization of three or four glucose residues in limit dextrin.</text>
        <dbReference type="EC" id="3.2.1.196"/>
    </reaction>
</comment>
<comment type="pathway">
    <text evidence="1">Glycan degradation; glycogen degradation.</text>
</comment>
<comment type="similarity">
    <text evidence="1">Belongs to the glycosyl hydrolase 13 family.</text>
</comment>
<gene>
    <name evidence="1" type="primary">glgX</name>
    <name type="ordered locus">ECUMN_3895</name>
</gene>
<feature type="chain" id="PRO_1000139868" description="Glycogen debranching enzyme">
    <location>
        <begin position="1"/>
        <end position="657"/>
    </location>
</feature>
<feature type="region of interest" description="Disordered" evidence="2">
    <location>
        <begin position="460"/>
        <end position="479"/>
    </location>
</feature>
<feature type="active site" description="Nucleophile" evidence="1">
    <location>
        <position position="336"/>
    </location>
</feature>
<feature type="active site" description="Proton donor" evidence="1">
    <location>
        <position position="371"/>
    </location>
</feature>
<feature type="site" description="Transition state stabilizer" evidence="1">
    <location>
        <position position="443"/>
    </location>
</feature>
<proteinExistence type="inferred from homology"/>
<dbReference type="EC" id="3.2.1.196" evidence="1"/>
<dbReference type="EMBL" id="CU928163">
    <property type="protein sequence ID" value="CAR15041.1"/>
    <property type="molecule type" value="Genomic_DNA"/>
</dbReference>
<dbReference type="RefSeq" id="WP_000192508.1">
    <property type="nucleotide sequence ID" value="NC_011751.1"/>
</dbReference>
<dbReference type="RefSeq" id="YP_002414546.1">
    <property type="nucleotide sequence ID" value="NC_011751.1"/>
</dbReference>
<dbReference type="SMR" id="B7NE41"/>
<dbReference type="STRING" id="585056.ECUMN_3895"/>
<dbReference type="CAZy" id="CBM48">
    <property type="family name" value="Carbohydrate-Binding Module Family 48"/>
</dbReference>
<dbReference type="CAZy" id="GH13">
    <property type="family name" value="Glycoside Hydrolase Family 13"/>
</dbReference>
<dbReference type="KEGG" id="eum:ECUMN_3895"/>
<dbReference type="PATRIC" id="fig|585056.7.peg.4069"/>
<dbReference type="HOGENOM" id="CLU_011725_1_1_6"/>
<dbReference type="UniPathway" id="UPA00165"/>
<dbReference type="Proteomes" id="UP000007097">
    <property type="component" value="Chromosome"/>
</dbReference>
<dbReference type="GO" id="GO:0004133">
    <property type="term" value="F:glycogen debranching enzyme activity"/>
    <property type="evidence" value="ECO:0007669"/>
    <property type="project" value="UniProtKB-UniRule"/>
</dbReference>
<dbReference type="GO" id="GO:0004553">
    <property type="term" value="F:hydrolase activity, hydrolyzing O-glycosyl compounds"/>
    <property type="evidence" value="ECO:0007669"/>
    <property type="project" value="InterPro"/>
</dbReference>
<dbReference type="GO" id="GO:0005980">
    <property type="term" value="P:glycogen catabolic process"/>
    <property type="evidence" value="ECO:0007669"/>
    <property type="project" value="UniProtKB-UniRule"/>
</dbReference>
<dbReference type="CDD" id="cd11326">
    <property type="entry name" value="AmyAc_Glg_debranch"/>
    <property type="match status" value="1"/>
</dbReference>
<dbReference type="CDD" id="cd02856">
    <property type="entry name" value="E_set_GDE_Isoamylase_N"/>
    <property type="match status" value="1"/>
</dbReference>
<dbReference type="FunFam" id="2.60.40.10:FF:000468">
    <property type="entry name" value="Glycogen debranching enzyme"/>
    <property type="match status" value="1"/>
</dbReference>
<dbReference type="FunFam" id="3.20.20.80:FF:000031">
    <property type="entry name" value="Glycogen debranching enzyme"/>
    <property type="match status" value="1"/>
</dbReference>
<dbReference type="Gene3D" id="3.20.20.80">
    <property type="entry name" value="Glycosidases"/>
    <property type="match status" value="1"/>
</dbReference>
<dbReference type="Gene3D" id="2.60.40.1180">
    <property type="entry name" value="Golgi alpha-mannosidase II"/>
    <property type="match status" value="1"/>
</dbReference>
<dbReference type="Gene3D" id="2.60.40.10">
    <property type="entry name" value="Immunoglobulins"/>
    <property type="match status" value="1"/>
</dbReference>
<dbReference type="HAMAP" id="MF_01248">
    <property type="entry name" value="GlgX"/>
    <property type="match status" value="1"/>
</dbReference>
<dbReference type="InterPro" id="IPR040784">
    <property type="entry name" value="GlgX_C"/>
</dbReference>
<dbReference type="InterPro" id="IPR044505">
    <property type="entry name" value="GlgX_Isoamylase_N_E_set"/>
</dbReference>
<dbReference type="InterPro" id="IPR006047">
    <property type="entry name" value="Glyco_hydro_13_cat_dom"/>
</dbReference>
<dbReference type="InterPro" id="IPR004193">
    <property type="entry name" value="Glyco_hydro_13_N"/>
</dbReference>
<dbReference type="InterPro" id="IPR013780">
    <property type="entry name" value="Glyco_hydro_b"/>
</dbReference>
<dbReference type="InterPro" id="IPR022844">
    <property type="entry name" value="Glycogen_debranch_bac"/>
</dbReference>
<dbReference type="InterPro" id="IPR011837">
    <property type="entry name" value="Glycogen_debranch_GlgX"/>
</dbReference>
<dbReference type="InterPro" id="IPR017853">
    <property type="entry name" value="Glycoside_hydrolase_SF"/>
</dbReference>
<dbReference type="InterPro" id="IPR013783">
    <property type="entry name" value="Ig-like_fold"/>
</dbReference>
<dbReference type="InterPro" id="IPR014756">
    <property type="entry name" value="Ig_E-set"/>
</dbReference>
<dbReference type="NCBIfam" id="TIGR02100">
    <property type="entry name" value="glgX_debranch"/>
    <property type="match status" value="1"/>
</dbReference>
<dbReference type="NCBIfam" id="NF002983">
    <property type="entry name" value="PRK03705.1"/>
    <property type="match status" value="1"/>
</dbReference>
<dbReference type="PANTHER" id="PTHR43002">
    <property type="entry name" value="GLYCOGEN DEBRANCHING ENZYME"/>
    <property type="match status" value="1"/>
</dbReference>
<dbReference type="Pfam" id="PF00128">
    <property type="entry name" value="Alpha-amylase"/>
    <property type="match status" value="1"/>
</dbReference>
<dbReference type="Pfam" id="PF02922">
    <property type="entry name" value="CBM_48"/>
    <property type="match status" value="1"/>
</dbReference>
<dbReference type="Pfam" id="PF18390">
    <property type="entry name" value="GlgX_C"/>
    <property type="match status" value="1"/>
</dbReference>
<dbReference type="SMART" id="SM00642">
    <property type="entry name" value="Aamy"/>
    <property type="match status" value="1"/>
</dbReference>
<dbReference type="SUPFAM" id="SSF51445">
    <property type="entry name" value="(Trans)glycosidases"/>
    <property type="match status" value="1"/>
</dbReference>
<dbReference type="SUPFAM" id="SSF81296">
    <property type="entry name" value="E set domains"/>
    <property type="match status" value="1"/>
</dbReference>
<name>GLGX_ECOLU</name>
<accession>B7NE41</accession>